<proteinExistence type="inferred from homology"/>
<name>BIOH_ECO5E</name>
<dbReference type="EC" id="3.1.1.85" evidence="2"/>
<dbReference type="EMBL" id="CP001164">
    <property type="protein sequence ID" value="ACI37049.1"/>
    <property type="molecule type" value="Genomic_DNA"/>
</dbReference>
<dbReference type="RefSeq" id="WP_001060090.1">
    <property type="nucleotide sequence ID" value="NC_011353.1"/>
</dbReference>
<dbReference type="SMR" id="B5YTW3"/>
<dbReference type="ESTHER" id="ecoli-bioh">
    <property type="family name" value="BioH"/>
</dbReference>
<dbReference type="MEROPS" id="S33.994"/>
<dbReference type="KEGG" id="ecf:ECH74115_4719"/>
<dbReference type="HOGENOM" id="CLU_020336_12_2_6"/>
<dbReference type="UniPathway" id="UPA00078"/>
<dbReference type="GO" id="GO:0005737">
    <property type="term" value="C:cytoplasm"/>
    <property type="evidence" value="ECO:0007669"/>
    <property type="project" value="UniProtKB-SubCell"/>
</dbReference>
<dbReference type="GO" id="GO:0090499">
    <property type="term" value="F:pimelyl-[acyl-carrier protein] methyl ester esterase activity"/>
    <property type="evidence" value="ECO:0007669"/>
    <property type="project" value="UniProtKB-EC"/>
</dbReference>
<dbReference type="GO" id="GO:0009102">
    <property type="term" value="P:biotin biosynthetic process"/>
    <property type="evidence" value="ECO:0007669"/>
    <property type="project" value="UniProtKB-UniRule"/>
</dbReference>
<dbReference type="FunFam" id="3.40.50.1820:FF:000045">
    <property type="entry name" value="Pimeloyl-[acyl-carrier protein] methyl ester esterase"/>
    <property type="match status" value="1"/>
</dbReference>
<dbReference type="Gene3D" id="3.40.50.1820">
    <property type="entry name" value="alpha/beta hydrolase"/>
    <property type="match status" value="1"/>
</dbReference>
<dbReference type="HAMAP" id="MF_01260">
    <property type="entry name" value="Carboxylester"/>
    <property type="match status" value="1"/>
</dbReference>
<dbReference type="InterPro" id="IPR000073">
    <property type="entry name" value="AB_hydrolase_1"/>
</dbReference>
<dbReference type="InterPro" id="IPR029058">
    <property type="entry name" value="AB_hydrolase_fold"/>
</dbReference>
<dbReference type="InterPro" id="IPR010076">
    <property type="entry name" value="BioH"/>
</dbReference>
<dbReference type="InterPro" id="IPR050228">
    <property type="entry name" value="Carboxylesterase_BioH"/>
</dbReference>
<dbReference type="NCBIfam" id="TIGR01738">
    <property type="entry name" value="bioH"/>
    <property type="match status" value="1"/>
</dbReference>
<dbReference type="NCBIfam" id="NF007674">
    <property type="entry name" value="PRK10349.1"/>
    <property type="match status" value="1"/>
</dbReference>
<dbReference type="PANTHER" id="PTHR43194">
    <property type="entry name" value="HYDROLASE ALPHA/BETA FOLD FAMILY"/>
    <property type="match status" value="1"/>
</dbReference>
<dbReference type="PANTHER" id="PTHR43194:SF5">
    <property type="entry name" value="PIMELOYL-[ACYL-CARRIER PROTEIN] METHYL ESTER ESTERASE"/>
    <property type="match status" value="1"/>
</dbReference>
<dbReference type="Pfam" id="PF00561">
    <property type="entry name" value="Abhydrolase_1"/>
    <property type="match status" value="1"/>
</dbReference>
<dbReference type="SUPFAM" id="SSF53474">
    <property type="entry name" value="alpha/beta-Hydrolases"/>
    <property type="match status" value="1"/>
</dbReference>
<sequence>MNNIWWQTKGQGNVHLVLLHGWGLNAEVWRCIDEELSSHFTLHLVDLPGFGRSRGFGALSLAEMAEAVLRQAPDKAIWLGWSLGGLVASQIALTHPERVQALVTVASSPCFSARDEWPGIKPDVLAGFQQQLSDDFQRTVERFLALQTMGTETARQDARALKKTVLALPMPEVDVLNGGLEILKTVDLRLPLQNVPMPFLRLYGYLDGLVPRKVVPMLDKLWPHSESYIFAKAAHAPFISHPVEFRHVLVALKQRV</sequence>
<keyword id="KW-0093">Biotin biosynthesis</keyword>
<keyword id="KW-0963">Cytoplasm</keyword>
<keyword id="KW-0378">Hydrolase</keyword>
<keyword id="KW-0719">Serine esterase</keyword>
<reference key="1">
    <citation type="journal article" date="2011" name="Proc. Natl. Acad. Sci. U.S.A.">
        <title>Genomic anatomy of Escherichia coli O157:H7 outbreaks.</title>
        <authorList>
            <person name="Eppinger M."/>
            <person name="Mammel M.K."/>
            <person name="Leclerc J.E."/>
            <person name="Ravel J."/>
            <person name="Cebula T.A."/>
        </authorList>
    </citation>
    <scope>NUCLEOTIDE SEQUENCE [LARGE SCALE GENOMIC DNA]</scope>
    <source>
        <strain>EC4115 / EHEC</strain>
    </source>
</reference>
<protein>
    <recommendedName>
        <fullName evidence="2">Pimeloyl-[acyl-carrier protein] methyl ester esterase</fullName>
        <ecNumber evidence="2">3.1.1.85</ecNumber>
    </recommendedName>
    <alternativeName>
        <fullName evidence="2">Biotin synthesis protein BioH</fullName>
    </alternativeName>
    <alternativeName>
        <fullName evidence="2">Carboxylesterase BioH</fullName>
    </alternativeName>
</protein>
<organism>
    <name type="scientific">Escherichia coli O157:H7 (strain EC4115 / EHEC)</name>
    <dbReference type="NCBI Taxonomy" id="444450"/>
    <lineage>
        <taxon>Bacteria</taxon>
        <taxon>Pseudomonadati</taxon>
        <taxon>Pseudomonadota</taxon>
        <taxon>Gammaproteobacteria</taxon>
        <taxon>Enterobacterales</taxon>
        <taxon>Enterobacteriaceae</taxon>
        <taxon>Escherichia</taxon>
    </lineage>
</organism>
<comment type="function">
    <text evidence="2">The physiological role of BioH is to remove the methyl group introduced by BioC when the pimeloyl moiety is complete. It allows to synthesize pimeloyl-ACP via the fatty acid synthetic pathway through the hydrolysis of the ester bonds of pimeloyl-ACP esters.</text>
</comment>
<comment type="catalytic activity">
    <reaction evidence="2">
        <text>6-carboxyhexanoyl-[ACP] methyl ester + H2O = 6-carboxyhexanoyl-[ACP] + methanol + H(+)</text>
        <dbReference type="Rhea" id="RHEA:42700"/>
        <dbReference type="Rhea" id="RHEA-COMP:9955"/>
        <dbReference type="Rhea" id="RHEA-COMP:10186"/>
        <dbReference type="ChEBI" id="CHEBI:15377"/>
        <dbReference type="ChEBI" id="CHEBI:15378"/>
        <dbReference type="ChEBI" id="CHEBI:17790"/>
        <dbReference type="ChEBI" id="CHEBI:78846"/>
        <dbReference type="ChEBI" id="CHEBI:82735"/>
        <dbReference type="EC" id="3.1.1.85"/>
    </reaction>
</comment>
<comment type="pathway">
    <text evidence="2">Cofactor biosynthesis; biotin biosynthesis.</text>
</comment>
<comment type="subunit">
    <text evidence="2">Monomer.</text>
</comment>
<comment type="subcellular location">
    <subcellularLocation>
        <location evidence="2">Cytoplasm</location>
    </subcellularLocation>
</comment>
<comment type="similarity">
    <text evidence="2">Belongs to the AB hydrolase superfamily. Carboxylesterase BioH family.</text>
</comment>
<gene>
    <name evidence="2" type="primary">bioH</name>
    <name type="ordered locus">ECH74115_4719</name>
</gene>
<accession>B5YTW3</accession>
<evidence type="ECO:0000255" key="1"/>
<evidence type="ECO:0000255" key="2">
    <source>
        <dbReference type="HAMAP-Rule" id="MF_01260"/>
    </source>
</evidence>
<feature type="chain" id="PRO_1000139987" description="Pimeloyl-[acyl-carrier protein] methyl ester esterase">
    <location>
        <begin position="1"/>
        <end position="256"/>
    </location>
</feature>
<feature type="domain" description="AB hydrolase-1" evidence="1">
    <location>
        <begin position="15"/>
        <end position="242"/>
    </location>
</feature>
<feature type="active site" description="Nucleophile" evidence="2">
    <location>
        <position position="82"/>
    </location>
</feature>
<feature type="active site" evidence="2">
    <location>
        <position position="207"/>
    </location>
</feature>
<feature type="active site" evidence="2">
    <location>
        <position position="235"/>
    </location>
</feature>
<feature type="binding site" evidence="2">
    <location>
        <position position="22"/>
    </location>
    <ligand>
        <name>substrate</name>
    </ligand>
</feature>
<feature type="binding site" evidence="2">
    <location>
        <begin position="82"/>
        <end position="83"/>
    </location>
    <ligand>
        <name>substrate</name>
    </ligand>
</feature>
<feature type="binding site" evidence="2">
    <location>
        <begin position="143"/>
        <end position="147"/>
    </location>
    <ligand>
        <name>substrate</name>
    </ligand>
</feature>
<feature type="binding site" evidence="2">
    <location>
        <position position="235"/>
    </location>
    <ligand>
        <name>substrate</name>
    </ligand>
</feature>